<name>PAT0_SOLTU</name>
<proteinExistence type="inferred from homology"/>
<feature type="signal peptide">
    <location>
        <begin position="1"/>
        <end position="23"/>
    </location>
</feature>
<feature type="chain" id="PRO_0000032256" description="Patatin">
    <location>
        <begin position="24"/>
        <end position="386"/>
    </location>
</feature>
<feature type="domain" description="PNPLA" evidence="3">
    <location>
        <begin position="32"/>
        <end position="229"/>
    </location>
</feature>
<feature type="short sequence motif" description="GXGXXG" evidence="3">
    <location>
        <begin position="36"/>
        <end position="41"/>
    </location>
</feature>
<feature type="short sequence motif" description="GXSXG" evidence="3">
    <location>
        <begin position="75"/>
        <end position="79"/>
    </location>
</feature>
<feature type="short sequence motif" description="DGA/G" evidence="3">
    <location>
        <begin position="215"/>
        <end position="217"/>
    </location>
</feature>
<feature type="active site" description="Nucleophile" evidence="3">
    <location>
        <position position="77"/>
    </location>
</feature>
<feature type="active site" description="Proton acceptor" evidence="3">
    <location>
        <position position="215"/>
    </location>
</feature>
<feature type="glycosylation site" description="N-linked (GlcNAc...) asparagine" evidence="2">
    <location>
        <position position="115"/>
    </location>
</feature>
<accession>P07745</accession>
<comment type="function">
    <text>Probable lipolytic acyl hydrolase (LAH), an activity which is thought to be involved in the response of tubers to pathogens.</text>
</comment>
<comment type="subcellular location">
    <subcellularLocation>
        <location evidence="1">Vacuole</location>
    </subcellularLocation>
</comment>
<comment type="domain">
    <text>The nitrogen atoms of the two glycine residues in the GGXR motif define the oxyanion hole, and stabilize the oxyanion that forms during the nucleophilic attack by the catalytic serine during substrate cleavage.</text>
</comment>
<comment type="miscellaneous">
    <text>Patatin have a dual role as a somatic storage protein and as an enzyme involved in host resistance. This tuber protein represents approximately 40% of the total protein in mature tubers.</text>
</comment>
<comment type="similarity">
    <text evidence="4">Belongs to the patatin family.</text>
</comment>
<evidence type="ECO:0000250" key="1"/>
<evidence type="ECO:0000255" key="2"/>
<evidence type="ECO:0000255" key="3">
    <source>
        <dbReference type="PROSITE-ProRule" id="PRU01161"/>
    </source>
</evidence>
<evidence type="ECO:0000305" key="4"/>
<organism>
    <name type="scientific">Solanum tuberosum</name>
    <name type="common">Potato</name>
    <dbReference type="NCBI Taxonomy" id="4113"/>
    <lineage>
        <taxon>Eukaryota</taxon>
        <taxon>Viridiplantae</taxon>
        <taxon>Streptophyta</taxon>
        <taxon>Embryophyta</taxon>
        <taxon>Tracheophyta</taxon>
        <taxon>Spermatophyta</taxon>
        <taxon>Magnoliopsida</taxon>
        <taxon>eudicotyledons</taxon>
        <taxon>Gunneridae</taxon>
        <taxon>Pentapetalae</taxon>
        <taxon>asterids</taxon>
        <taxon>lamiids</taxon>
        <taxon>Solanales</taxon>
        <taxon>Solanaceae</taxon>
        <taxon>Solanoideae</taxon>
        <taxon>Solaneae</taxon>
        <taxon>Solanum</taxon>
    </lineage>
</organism>
<reference key="1">
    <citation type="journal article" date="1986" name="Nucleic Acids Res.">
        <title>The structure and transcription start site of a major potato tuber protein gene.</title>
        <authorList>
            <person name="Bevan M."/>
            <person name="Barker R."/>
            <person name="Goldsbrough A."/>
            <person name="Jarvis M."/>
            <person name="Kavanagh T."/>
            <person name="Iturriaga G."/>
        </authorList>
    </citation>
    <scope>NUCLEOTIDE SEQUENCE [GENOMIC DNA]</scope>
    <source>
        <strain>cv. Maris Piper 6094</strain>
    </source>
</reference>
<sequence>MATTKSFLILFFMILATTSSTCATLGEMVTVLSIDGGGIKGIIPAIILEFLEGQLQEVDNNKDARLADYFDVIGGTSTGGLLTAMITTPNENNRPFAAAKDIVPFYFEHGPHIFNYSGSIFGPRYDGKYLLQVLQEKLGETRVHQALTEVAISSFDIKTNKPVIFTKSNLAESPQLDAKMYDICYSTAAAPIYFPPHHFVTHTSNGATYEFNLVDGAVATVGDPALLSLSVATRLAQDDPAFSSIKSLDYKQMLLLSLGTGTNSEFDKTYTAEEAAKWGPLRWMLAIQQMTNAASSYMTDYYISTVFQARHSQNNYLRVQENALTGTTTEMDDASEANMELLVQVGETLLKKPVSKDSPETYEEALKRFAKLLSDRKKLRANKASH</sequence>
<dbReference type="EC" id="3.1.1.-"/>
<dbReference type="EMBL" id="X03956">
    <property type="protein sequence ID" value="CAA27588.1"/>
    <property type="molecule type" value="Genomic_DNA"/>
</dbReference>
<dbReference type="SMR" id="P07745"/>
<dbReference type="STRING" id="4113.P07745"/>
<dbReference type="Allergome" id="639">
    <property type="allergen name" value="Sola t 1"/>
</dbReference>
<dbReference type="InParanoid" id="P07745"/>
<dbReference type="Proteomes" id="UP000011115">
    <property type="component" value="Unassembled WGS sequence"/>
</dbReference>
<dbReference type="ExpressionAtlas" id="P07745">
    <property type="expression patterns" value="baseline"/>
</dbReference>
<dbReference type="GO" id="GO:0005773">
    <property type="term" value="C:vacuole"/>
    <property type="evidence" value="ECO:0007669"/>
    <property type="project" value="UniProtKB-SubCell"/>
</dbReference>
<dbReference type="GO" id="GO:0047372">
    <property type="term" value="F:monoacylglycerol lipase activity"/>
    <property type="evidence" value="ECO:0000318"/>
    <property type="project" value="GO_Central"/>
</dbReference>
<dbReference type="GO" id="GO:0045735">
    <property type="term" value="F:nutrient reservoir activity"/>
    <property type="evidence" value="ECO:0007669"/>
    <property type="project" value="UniProtKB-KW"/>
</dbReference>
<dbReference type="GO" id="GO:0004620">
    <property type="term" value="F:phospholipase activity"/>
    <property type="evidence" value="ECO:0000318"/>
    <property type="project" value="GO_Central"/>
</dbReference>
<dbReference type="GO" id="GO:0006952">
    <property type="term" value="P:defense response"/>
    <property type="evidence" value="ECO:0007669"/>
    <property type="project" value="UniProtKB-KW"/>
</dbReference>
<dbReference type="GO" id="GO:0016042">
    <property type="term" value="P:lipid catabolic process"/>
    <property type="evidence" value="ECO:0007669"/>
    <property type="project" value="UniProtKB-KW"/>
</dbReference>
<dbReference type="Gene3D" id="3.40.1090.10">
    <property type="entry name" value="Cytosolic phospholipase A2 catalytic domain"/>
    <property type="match status" value="1"/>
</dbReference>
<dbReference type="InterPro" id="IPR016035">
    <property type="entry name" value="Acyl_Trfase/lysoPLipase"/>
</dbReference>
<dbReference type="InterPro" id="IPR002641">
    <property type="entry name" value="PNPLA_dom"/>
</dbReference>
<dbReference type="PANTHER" id="PTHR32176:SF85">
    <property type="entry name" value="PATATIN GROUP D-2"/>
    <property type="match status" value="1"/>
</dbReference>
<dbReference type="PANTHER" id="PTHR32176">
    <property type="entry name" value="XYLOSE ISOMERASE"/>
    <property type="match status" value="1"/>
</dbReference>
<dbReference type="Pfam" id="PF01734">
    <property type="entry name" value="Patatin"/>
    <property type="match status" value="1"/>
</dbReference>
<dbReference type="SUPFAM" id="SSF52151">
    <property type="entry name" value="FabD/lysophospholipase-like"/>
    <property type="match status" value="1"/>
</dbReference>
<dbReference type="PROSITE" id="PS51635">
    <property type="entry name" value="PNPLA"/>
    <property type="match status" value="1"/>
</dbReference>
<protein>
    <recommendedName>
        <fullName>Patatin</fullName>
        <ecNumber>3.1.1.-</ecNumber>
    </recommendedName>
    <alternativeName>
        <fullName>Potato tuber protein</fullName>
    </alternativeName>
</protein>
<keyword id="KW-0325">Glycoprotein</keyword>
<keyword id="KW-0378">Hydrolase</keyword>
<keyword id="KW-0442">Lipid degradation</keyword>
<keyword id="KW-0443">Lipid metabolism</keyword>
<keyword id="KW-0611">Plant defense</keyword>
<keyword id="KW-1185">Reference proteome</keyword>
<keyword id="KW-0732">Signal</keyword>
<keyword id="KW-0758">Storage protein</keyword>
<keyword id="KW-0926">Vacuole</keyword>